<keyword id="KW-0012">Acyltransferase</keyword>
<keyword id="KW-0450">Lipoyl</keyword>
<keyword id="KW-0808">Transferase</keyword>
<evidence type="ECO:0000250" key="1"/>
<evidence type="ECO:0000255" key="2"/>
<evidence type="ECO:0000255" key="3">
    <source>
        <dbReference type="PROSITE-ProRule" id="PRU01066"/>
    </source>
</evidence>
<evidence type="ECO:0000255" key="4">
    <source>
        <dbReference type="PROSITE-ProRule" id="PRU01170"/>
    </source>
</evidence>
<evidence type="ECO:0000256" key="5">
    <source>
        <dbReference type="SAM" id="MobiDB-lite"/>
    </source>
</evidence>
<evidence type="ECO:0000305" key="6"/>
<organism>
    <name type="scientific">Staphylococcus aureus (strain COL)</name>
    <dbReference type="NCBI Taxonomy" id="93062"/>
    <lineage>
        <taxon>Bacteria</taxon>
        <taxon>Bacillati</taxon>
        <taxon>Bacillota</taxon>
        <taxon>Bacilli</taxon>
        <taxon>Bacillales</taxon>
        <taxon>Staphylococcaceae</taxon>
        <taxon>Staphylococcus</taxon>
    </lineage>
</organism>
<name>ODP2_STAAC</name>
<sequence length="430" mass="46382">MAFEFRLPDIGEGIHEGEIVKWFVKAGDTIEEDDVLAEVQNDKSVVEIPSPVSGTVEEVMVEEGTVAVVGDVIVKIDAPDAEDMQFKGHDDDSSSKEEPAKEEAPAEQAPVATQTEEVDENRTVKAMPSVRKYAREKGVNIKAVSGSGKNGRITKEDVDAYLNGGAPTASNESAASATSEEVAETPAAPAAVTLEGDFPETTEKIPAMRRAIAKAMVNSKHTAPHVTLMDEIDVQALWDHRKKFKEIAAEQGTKLTFLPYVVKALVSALKKYPALNTSFNEEAGEIVHKHYWNIGIAADTDRGLLVPVVKHADRKSIFQISDEINELAVKARDGKLTADEMKGATCTISNIGSAGGQWFTPVINHPEVAILGIGRIAQKPIVKDGEIVAAPVLALSLSFDHRQIDGATGQNAMNHIKRLLNNPELLLMEG</sequence>
<accession>Q5HGY9</accession>
<protein>
    <recommendedName>
        <fullName>Dihydrolipoyllysine-residue acetyltransferase component of pyruvate dehydrogenase complex</fullName>
        <ecNumber>2.3.1.12</ecNumber>
    </recommendedName>
    <alternativeName>
        <fullName>Dihydrolipoamide acetyltransferase component of pyruvate dehydrogenase complex</fullName>
    </alternativeName>
    <alternativeName>
        <fullName>E2</fullName>
    </alternativeName>
</protein>
<feature type="chain" id="PRO_0000162287" description="Dihydrolipoyllysine-residue acetyltransferase component of pyruvate dehydrogenase complex">
    <location>
        <begin position="1"/>
        <end position="430"/>
    </location>
</feature>
<feature type="domain" description="Lipoyl-binding" evidence="3">
    <location>
        <begin position="2"/>
        <end position="77"/>
    </location>
</feature>
<feature type="domain" description="Peripheral subunit-binding (PSBD)" evidence="4">
    <location>
        <begin position="125"/>
        <end position="162"/>
    </location>
</feature>
<feature type="region of interest" description="Disordered" evidence="5">
    <location>
        <begin position="80"/>
        <end position="122"/>
    </location>
</feature>
<feature type="region of interest" description="Disordered" evidence="5">
    <location>
        <begin position="165"/>
        <end position="200"/>
    </location>
</feature>
<feature type="compositionally biased region" description="Basic and acidic residues" evidence="5">
    <location>
        <begin position="84"/>
        <end position="104"/>
    </location>
</feature>
<feature type="compositionally biased region" description="Low complexity" evidence="5">
    <location>
        <begin position="166"/>
        <end position="193"/>
    </location>
</feature>
<feature type="active site" evidence="2">
    <location>
        <position position="401"/>
    </location>
</feature>
<feature type="modified residue" description="N6-lipoyllysine" evidence="1 3">
    <location>
        <position position="43"/>
    </location>
</feature>
<dbReference type="EC" id="2.3.1.12"/>
<dbReference type="EMBL" id="CP000046">
    <property type="protein sequence ID" value="AAW37984.1"/>
    <property type="molecule type" value="Genomic_DNA"/>
</dbReference>
<dbReference type="RefSeq" id="WP_000863440.1">
    <property type="nucleotide sequence ID" value="NZ_JBGOFO010000002.1"/>
</dbReference>
<dbReference type="SMR" id="Q5HGY9"/>
<dbReference type="KEGG" id="sac:SACOL1104"/>
<dbReference type="HOGENOM" id="CLU_016733_10_0_9"/>
<dbReference type="Proteomes" id="UP000000530">
    <property type="component" value="Chromosome"/>
</dbReference>
<dbReference type="GO" id="GO:0005737">
    <property type="term" value="C:cytoplasm"/>
    <property type="evidence" value="ECO:0007669"/>
    <property type="project" value="TreeGrafter"/>
</dbReference>
<dbReference type="GO" id="GO:0004742">
    <property type="term" value="F:dihydrolipoyllysine-residue acetyltransferase activity"/>
    <property type="evidence" value="ECO:0007669"/>
    <property type="project" value="UniProtKB-EC"/>
</dbReference>
<dbReference type="GO" id="GO:0031405">
    <property type="term" value="F:lipoic acid binding"/>
    <property type="evidence" value="ECO:0007669"/>
    <property type="project" value="TreeGrafter"/>
</dbReference>
<dbReference type="CDD" id="cd06849">
    <property type="entry name" value="lipoyl_domain"/>
    <property type="match status" value="1"/>
</dbReference>
<dbReference type="FunFam" id="3.30.559.10:FF:000007">
    <property type="entry name" value="Dihydrolipoamide acetyltransferase component of pyruvate dehydrogenase complex"/>
    <property type="match status" value="1"/>
</dbReference>
<dbReference type="FunFam" id="4.10.320.10:FF:000011">
    <property type="entry name" value="Dihydrolipoamide acetyltransferase component of pyruvate dehydrogenase complex"/>
    <property type="match status" value="1"/>
</dbReference>
<dbReference type="Gene3D" id="2.40.50.100">
    <property type="match status" value="1"/>
</dbReference>
<dbReference type="Gene3D" id="3.30.559.10">
    <property type="entry name" value="Chloramphenicol acetyltransferase-like domain"/>
    <property type="match status" value="1"/>
</dbReference>
<dbReference type="Gene3D" id="4.10.320.10">
    <property type="entry name" value="E3-binding domain"/>
    <property type="match status" value="1"/>
</dbReference>
<dbReference type="InterPro" id="IPR003016">
    <property type="entry name" value="2-oxoA_DH_lipoyl-BS"/>
</dbReference>
<dbReference type="InterPro" id="IPR001078">
    <property type="entry name" value="2-oxoacid_DH_actylTfrase"/>
</dbReference>
<dbReference type="InterPro" id="IPR050743">
    <property type="entry name" value="2-oxoacid_DH_E2_comp"/>
</dbReference>
<dbReference type="InterPro" id="IPR000089">
    <property type="entry name" value="Biotin_lipoyl"/>
</dbReference>
<dbReference type="InterPro" id="IPR023213">
    <property type="entry name" value="CAT-like_dom_sf"/>
</dbReference>
<dbReference type="InterPro" id="IPR036625">
    <property type="entry name" value="E3-bd_dom_sf"/>
</dbReference>
<dbReference type="InterPro" id="IPR004167">
    <property type="entry name" value="PSBD"/>
</dbReference>
<dbReference type="InterPro" id="IPR011053">
    <property type="entry name" value="Single_hybrid_motif"/>
</dbReference>
<dbReference type="PANTHER" id="PTHR43178">
    <property type="entry name" value="DIHYDROLIPOAMIDE ACETYLTRANSFERASE COMPONENT OF PYRUVATE DEHYDROGENASE COMPLEX"/>
    <property type="match status" value="1"/>
</dbReference>
<dbReference type="PANTHER" id="PTHR43178:SF5">
    <property type="entry name" value="LIPOAMIDE ACYLTRANSFERASE COMPONENT OF BRANCHED-CHAIN ALPHA-KETO ACID DEHYDROGENASE COMPLEX, MITOCHONDRIAL"/>
    <property type="match status" value="1"/>
</dbReference>
<dbReference type="Pfam" id="PF00198">
    <property type="entry name" value="2-oxoacid_dh"/>
    <property type="match status" value="1"/>
</dbReference>
<dbReference type="Pfam" id="PF00364">
    <property type="entry name" value="Biotin_lipoyl"/>
    <property type="match status" value="1"/>
</dbReference>
<dbReference type="Pfam" id="PF02817">
    <property type="entry name" value="E3_binding"/>
    <property type="match status" value="1"/>
</dbReference>
<dbReference type="SUPFAM" id="SSF52777">
    <property type="entry name" value="CoA-dependent acyltransferases"/>
    <property type="match status" value="1"/>
</dbReference>
<dbReference type="SUPFAM" id="SSF47005">
    <property type="entry name" value="Peripheral subunit-binding domain of 2-oxo acid dehydrogenase complex"/>
    <property type="match status" value="1"/>
</dbReference>
<dbReference type="SUPFAM" id="SSF51230">
    <property type="entry name" value="Single hybrid motif"/>
    <property type="match status" value="1"/>
</dbReference>
<dbReference type="PROSITE" id="PS50968">
    <property type="entry name" value="BIOTINYL_LIPOYL"/>
    <property type="match status" value="1"/>
</dbReference>
<dbReference type="PROSITE" id="PS00189">
    <property type="entry name" value="LIPOYL"/>
    <property type="match status" value="1"/>
</dbReference>
<dbReference type="PROSITE" id="PS51826">
    <property type="entry name" value="PSBD"/>
    <property type="match status" value="1"/>
</dbReference>
<comment type="function">
    <text>The pyruvate dehydrogenase complex catalyzes the overall conversion of pyruvate to acetyl-CoA and CO(2). It contains multiple copies of three enzymatic components: pyruvate dehydrogenase (E1), dihydrolipoamide acetyltransferase (E2) and lipoamide dehydrogenase (E3).</text>
</comment>
<comment type="catalytic activity">
    <reaction>
        <text>N(6)-[(R)-dihydrolipoyl]-L-lysyl-[protein] + acetyl-CoA = N(6)-[(R)-S(8)-acetyldihydrolipoyl]-L-lysyl-[protein] + CoA</text>
        <dbReference type="Rhea" id="RHEA:17017"/>
        <dbReference type="Rhea" id="RHEA-COMP:10475"/>
        <dbReference type="Rhea" id="RHEA-COMP:10478"/>
        <dbReference type="ChEBI" id="CHEBI:57287"/>
        <dbReference type="ChEBI" id="CHEBI:57288"/>
        <dbReference type="ChEBI" id="CHEBI:83100"/>
        <dbReference type="ChEBI" id="CHEBI:83111"/>
        <dbReference type="EC" id="2.3.1.12"/>
    </reaction>
</comment>
<comment type="cofactor">
    <cofactor evidence="1">
        <name>(R)-lipoate</name>
        <dbReference type="ChEBI" id="CHEBI:83088"/>
    </cofactor>
    <text evidence="1">Binds 1 lipoyl cofactor covalently.</text>
</comment>
<comment type="subunit">
    <text evidence="1">Forms a 24-polypeptide structural core with octahedral symmetry.</text>
</comment>
<comment type="similarity">
    <text evidence="6">Belongs to the 2-oxoacid dehydrogenase family.</text>
</comment>
<reference key="1">
    <citation type="journal article" date="2005" name="J. Bacteriol.">
        <title>Insights on evolution of virulence and resistance from the complete genome analysis of an early methicillin-resistant Staphylococcus aureus strain and a biofilm-producing methicillin-resistant Staphylococcus epidermidis strain.</title>
        <authorList>
            <person name="Gill S.R."/>
            <person name="Fouts D.E."/>
            <person name="Archer G.L."/>
            <person name="Mongodin E.F."/>
            <person name="DeBoy R.T."/>
            <person name="Ravel J."/>
            <person name="Paulsen I.T."/>
            <person name="Kolonay J.F."/>
            <person name="Brinkac L.M."/>
            <person name="Beanan M.J."/>
            <person name="Dodson R.J."/>
            <person name="Daugherty S.C."/>
            <person name="Madupu R."/>
            <person name="Angiuoli S.V."/>
            <person name="Durkin A.S."/>
            <person name="Haft D.H."/>
            <person name="Vamathevan J.J."/>
            <person name="Khouri H."/>
            <person name="Utterback T.R."/>
            <person name="Lee C."/>
            <person name="Dimitrov G."/>
            <person name="Jiang L."/>
            <person name="Qin H."/>
            <person name="Weidman J."/>
            <person name="Tran K."/>
            <person name="Kang K.H."/>
            <person name="Hance I.R."/>
            <person name="Nelson K.E."/>
            <person name="Fraser C.M."/>
        </authorList>
    </citation>
    <scope>NUCLEOTIDE SEQUENCE [LARGE SCALE GENOMIC DNA]</scope>
    <source>
        <strain>COL</strain>
    </source>
</reference>
<gene>
    <name type="primary">pdhC</name>
    <name type="ordered locus">SACOL1104</name>
</gene>
<proteinExistence type="inferred from homology"/>